<name>GSOX1_ARATH</name>
<sequence length="459" mass="52309">MAPTQNTICSKHVAVIGAGAAGLVTARELRREGHTVVVFDREKQVGGLWNYSSKADSDPLSLDTTRTIVHTSIYESLRTNLPRECMGFTDFPFVPRIHDISRDSRRYPSHREVLAYLQDFAREFKIEEMVRFETEVVCVEPVNGKWSVRSKNSVGFAAHEIFDAVVVCSGHFTEPNVAHIPGIKSWPGKQIHSHNYRVPGPFNNEVVVVIGNYASGADISRDIAKVAKEVHIASRASESDTYQKLPVPQNNLWVHSEIDFAHQDGSILFKNGKVVYADTIVHCTGYKYYFPFLETNGYININENRVEPLYKHVFLPALAPSLSFIGLPGMAIQFVMFEIQSKWVAAVLSGRVILPSQDKMMEDIIEWYATLDVLGIPKRHTHKLGKISCEYLNWIAEECHCSPVENWRIQEVERGFQRMVSHPEIYRDEWDDDDLMEEAYKDFARKKLISSHPSYFLES</sequence>
<accession>Q9SS04</accession>
<feature type="chain" id="PRO_0000360991" description="Flavin-containing monooxygenase FMO GS-OX1">
    <location>
        <begin position="1"/>
        <end position="459"/>
    </location>
</feature>
<feature type="binding site" evidence="2">
    <location>
        <begin position="17"/>
        <end position="22"/>
    </location>
    <ligand>
        <name>FAD</name>
        <dbReference type="ChEBI" id="CHEBI:57692"/>
    </ligand>
</feature>
<feature type="binding site" evidence="2">
    <location>
        <begin position="211"/>
        <end position="216"/>
    </location>
    <ligand>
        <name>NADP(+)</name>
        <dbReference type="ChEBI" id="CHEBI:58349"/>
    </ligand>
</feature>
<evidence type="ECO:0000250" key="1"/>
<evidence type="ECO:0000255" key="2"/>
<evidence type="ECO:0000269" key="3">
    <source>
    </source>
</evidence>
<evidence type="ECO:0000305" key="4"/>
<comment type="function">
    <text evidence="3">Catalyzes the conversion of methylthioalkyl glucosinolates into methylsulfinylalkyl glucosinolates. Able to S-oxygenate both desulfo- and intact 4-methylthiobutyl glucosinolates, but no activity with methionine, dihomomethionine or 5-methylthiopentaldoxime.</text>
</comment>
<comment type="catalytic activity">
    <reaction evidence="3">
        <text>a (Z)-omega-(methylsulfanyl)-N-sulfo-alkylhydroximate S-glucoside + NADPH + O2 + H(+) = a (Z)-omega-(methylsulfinyl)-alkyl-glucosinolate + NADP(+) + H2O</text>
        <dbReference type="Rhea" id="RHEA:42208"/>
        <dbReference type="Rhea" id="RHEA-COMP:13194"/>
        <dbReference type="Rhea" id="RHEA-COMP:13195"/>
        <dbReference type="ChEBI" id="CHEBI:15377"/>
        <dbReference type="ChEBI" id="CHEBI:15378"/>
        <dbReference type="ChEBI" id="CHEBI:15379"/>
        <dbReference type="ChEBI" id="CHEBI:57783"/>
        <dbReference type="ChEBI" id="CHEBI:58349"/>
        <dbReference type="ChEBI" id="CHEBI:136434"/>
        <dbReference type="ChEBI" id="CHEBI:136435"/>
        <dbReference type="EC" id="1.14.13.237"/>
    </reaction>
</comment>
<comment type="cofactor">
    <cofactor evidence="1">
        <name>FAD</name>
        <dbReference type="ChEBI" id="CHEBI:57692"/>
    </cofactor>
</comment>
<comment type="tissue specificity">
    <text evidence="3">Mainly expressed in leaves. Low levels in flowers and seeds.</text>
</comment>
<comment type="disruption phenotype">
    <text evidence="3">Increased accumulation of methylthiobutyl, -pentyl and -heptyl glucosinolates in leaves. No effects in seeds.</text>
</comment>
<comment type="similarity">
    <text evidence="4">Belongs to the FMO family.</text>
</comment>
<gene>
    <name type="primary">FMOGS-OX1</name>
    <name type="synonym">FMO3</name>
    <name type="ordered locus">At1g65860</name>
    <name type="ORF">F12P19.2</name>
</gene>
<proteinExistence type="evidence at protein level"/>
<dbReference type="EC" id="1.14.13.237" evidence="3"/>
<dbReference type="EMBL" id="AC009513">
    <property type="protein sequence ID" value="AAF06046.1"/>
    <property type="molecule type" value="Genomic_DNA"/>
</dbReference>
<dbReference type="EMBL" id="CP002684">
    <property type="protein sequence ID" value="AEE34434.1"/>
    <property type="molecule type" value="Genomic_DNA"/>
</dbReference>
<dbReference type="EMBL" id="BT000473">
    <property type="protein sequence ID" value="AAN17450.1"/>
    <property type="molecule type" value="mRNA"/>
</dbReference>
<dbReference type="EMBL" id="BT002190">
    <property type="protein sequence ID" value="AAN72201.1"/>
    <property type="molecule type" value="mRNA"/>
</dbReference>
<dbReference type="PIR" id="F96682">
    <property type="entry name" value="F96682"/>
</dbReference>
<dbReference type="RefSeq" id="NP_176761.1">
    <property type="nucleotide sequence ID" value="NM_105258.3"/>
</dbReference>
<dbReference type="SMR" id="Q9SS04"/>
<dbReference type="FunCoup" id="Q9SS04">
    <property type="interactions" value="514"/>
</dbReference>
<dbReference type="STRING" id="3702.Q9SS04"/>
<dbReference type="PaxDb" id="3702-AT1G65860.1"/>
<dbReference type="ProteomicsDB" id="248515"/>
<dbReference type="EnsemblPlants" id="AT1G65860.1">
    <property type="protein sequence ID" value="AT1G65860.1"/>
    <property type="gene ID" value="AT1G65860"/>
</dbReference>
<dbReference type="GeneID" id="842897"/>
<dbReference type="Gramene" id="AT1G65860.1">
    <property type="protein sequence ID" value="AT1G65860.1"/>
    <property type="gene ID" value="AT1G65860"/>
</dbReference>
<dbReference type="KEGG" id="ath:AT1G65860"/>
<dbReference type="Araport" id="AT1G65860"/>
<dbReference type="TAIR" id="AT1G65860">
    <property type="gene designation" value="FMO GS-OX1"/>
</dbReference>
<dbReference type="eggNOG" id="KOG1399">
    <property type="taxonomic scope" value="Eukaryota"/>
</dbReference>
<dbReference type="HOGENOM" id="CLU_006909_3_0_1"/>
<dbReference type="InParanoid" id="Q9SS04"/>
<dbReference type="OMA" id="EENIGKW"/>
<dbReference type="OrthoDB" id="66881at2759"/>
<dbReference type="PhylomeDB" id="Q9SS04"/>
<dbReference type="BioCyc" id="MetaCyc:AT1G65860-MONOMER"/>
<dbReference type="BRENDA" id="1.14.13.237">
    <property type="organism ID" value="399"/>
</dbReference>
<dbReference type="PRO" id="PR:Q9SS04"/>
<dbReference type="Proteomes" id="UP000006548">
    <property type="component" value="Chromosome 1"/>
</dbReference>
<dbReference type="ExpressionAtlas" id="Q9SS04">
    <property type="expression patterns" value="baseline and differential"/>
</dbReference>
<dbReference type="GO" id="GO:0080102">
    <property type="term" value="F:3-methylthiopropyl glucosinolate S-oxygenase activity"/>
    <property type="evidence" value="ECO:0000315"/>
    <property type="project" value="TAIR"/>
</dbReference>
<dbReference type="GO" id="GO:0080103">
    <property type="term" value="F:4-methylthiopropyl glucosinolate S-oxygenase activity"/>
    <property type="evidence" value="ECO:0000314"/>
    <property type="project" value="TAIR"/>
</dbReference>
<dbReference type="GO" id="GO:0080104">
    <property type="term" value="F:5-methylthiopropyl glucosinolate S-oxygenase activity"/>
    <property type="evidence" value="ECO:0000315"/>
    <property type="project" value="TAIR"/>
</dbReference>
<dbReference type="GO" id="GO:0080105">
    <property type="term" value="F:6-methylthiopropyl glucosinolate S-oxygenase activity"/>
    <property type="evidence" value="ECO:0000315"/>
    <property type="project" value="TAIR"/>
</dbReference>
<dbReference type="GO" id="GO:0080106">
    <property type="term" value="F:7-methylthiopropyl glucosinolate S-oxygenase activity"/>
    <property type="evidence" value="ECO:0000315"/>
    <property type="project" value="TAIR"/>
</dbReference>
<dbReference type="GO" id="GO:0080107">
    <property type="term" value="F:8-methylthiopropyl glucosinolate S-oxygenase activity"/>
    <property type="evidence" value="ECO:0000314"/>
    <property type="project" value="TAIR"/>
</dbReference>
<dbReference type="GO" id="GO:0050660">
    <property type="term" value="F:flavin adenine dinucleotide binding"/>
    <property type="evidence" value="ECO:0007669"/>
    <property type="project" value="InterPro"/>
</dbReference>
<dbReference type="GO" id="GO:0004499">
    <property type="term" value="F:N,N-dimethylaniline monooxygenase activity"/>
    <property type="evidence" value="ECO:0007669"/>
    <property type="project" value="InterPro"/>
</dbReference>
<dbReference type="GO" id="GO:0050661">
    <property type="term" value="F:NADP binding"/>
    <property type="evidence" value="ECO:0007669"/>
    <property type="project" value="InterPro"/>
</dbReference>
<dbReference type="GO" id="GO:0033506">
    <property type="term" value="P:glucosinolate biosynthetic process from homomethionine"/>
    <property type="evidence" value="ECO:0000315"/>
    <property type="project" value="TAIR"/>
</dbReference>
<dbReference type="FunFam" id="3.50.50.60:FF:000099">
    <property type="entry name" value="Flavin-containing monooxygenase"/>
    <property type="match status" value="1"/>
</dbReference>
<dbReference type="Gene3D" id="3.50.50.60">
    <property type="entry name" value="FAD/NAD(P)-binding domain"/>
    <property type="match status" value="2"/>
</dbReference>
<dbReference type="InterPro" id="IPR036188">
    <property type="entry name" value="FAD/NAD-bd_sf"/>
</dbReference>
<dbReference type="InterPro" id="IPR000960">
    <property type="entry name" value="Flavin_mOase"/>
</dbReference>
<dbReference type="InterPro" id="IPR020946">
    <property type="entry name" value="Flavin_mOase-like"/>
</dbReference>
<dbReference type="InterPro" id="IPR050346">
    <property type="entry name" value="FMO-like"/>
</dbReference>
<dbReference type="PANTHER" id="PTHR23023">
    <property type="entry name" value="DIMETHYLANILINE MONOOXYGENASE"/>
    <property type="match status" value="1"/>
</dbReference>
<dbReference type="Pfam" id="PF00743">
    <property type="entry name" value="FMO-like"/>
    <property type="match status" value="2"/>
</dbReference>
<dbReference type="PRINTS" id="PR00370">
    <property type="entry name" value="FMOXYGENASE"/>
</dbReference>
<dbReference type="SUPFAM" id="SSF51905">
    <property type="entry name" value="FAD/NAD(P)-binding domain"/>
    <property type="match status" value="2"/>
</dbReference>
<keyword id="KW-0274">FAD</keyword>
<keyword id="KW-0285">Flavoprotein</keyword>
<keyword id="KW-0503">Monooxygenase</keyword>
<keyword id="KW-0521">NADP</keyword>
<keyword id="KW-0560">Oxidoreductase</keyword>
<keyword id="KW-1185">Reference proteome</keyword>
<reference key="1">
    <citation type="journal article" date="2000" name="Nature">
        <title>Sequence and analysis of chromosome 1 of the plant Arabidopsis thaliana.</title>
        <authorList>
            <person name="Theologis A."/>
            <person name="Ecker J.R."/>
            <person name="Palm C.J."/>
            <person name="Federspiel N.A."/>
            <person name="Kaul S."/>
            <person name="White O."/>
            <person name="Alonso J."/>
            <person name="Altafi H."/>
            <person name="Araujo R."/>
            <person name="Bowman C.L."/>
            <person name="Brooks S.Y."/>
            <person name="Buehler E."/>
            <person name="Chan A."/>
            <person name="Chao Q."/>
            <person name="Chen H."/>
            <person name="Cheuk R.F."/>
            <person name="Chin C.W."/>
            <person name="Chung M.K."/>
            <person name="Conn L."/>
            <person name="Conway A.B."/>
            <person name="Conway A.R."/>
            <person name="Creasy T.H."/>
            <person name="Dewar K."/>
            <person name="Dunn P."/>
            <person name="Etgu P."/>
            <person name="Feldblyum T.V."/>
            <person name="Feng J.-D."/>
            <person name="Fong B."/>
            <person name="Fujii C.Y."/>
            <person name="Gill J.E."/>
            <person name="Goldsmith A.D."/>
            <person name="Haas B."/>
            <person name="Hansen N.F."/>
            <person name="Hughes B."/>
            <person name="Huizar L."/>
            <person name="Hunter J.L."/>
            <person name="Jenkins J."/>
            <person name="Johnson-Hopson C."/>
            <person name="Khan S."/>
            <person name="Khaykin E."/>
            <person name="Kim C.J."/>
            <person name="Koo H.L."/>
            <person name="Kremenetskaia I."/>
            <person name="Kurtz D.B."/>
            <person name="Kwan A."/>
            <person name="Lam B."/>
            <person name="Langin-Hooper S."/>
            <person name="Lee A."/>
            <person name="Lee J.M."/>
            <person name="Lenz C.A."/>
            <person name="Li J.H."/>
            <person name="Li Y.-P."/>
            <person name="Lin X."/>
            <person name="Liu S.X."/>
            <person name="Liu Z.A."/>
            <person name="Luros J.S."/>
            <person name="Maiti R."/>
            <person name="Marziali A."/>
            <person name="Militscher J."/>
            <person name="Miranda M."/>
            <person name="Nguyen M."/>
            <person name="Nierman W.C."/>
            <person name="Osborne B.I."/>
            <person name="Pai G."/>
            <person name="Peterson J."/>
            <person name="Pham P.K."/>
            <person name="Rizzo M."/>
            <person name="Rooney T."/>
            <person name="Rowley D."/>
            <person name="Sakano H."/>
            <person name="Salzberg S.L."/>
            <person name="Schwartz J.R."/>
            <person name="Shinn P."/>
            <person name="Southwick A.M."/>
            <person name="Sun H."/>
            <person name="Tallon L.J."/>
            <person name="Tambunga G."/>
            <person name="Toriumi M.J."/>
            <person name="Town C.D."/>
            <person name="Utterback T."/>
            <person name="Van Aken S."/>
            <person name="Vaysberg M."/>
            <person name="Vysotskaia V.S."/>
            <person name="Walker M."/>
            <person name="Wu D."/>
            <person name="Yu G."/>
            <person name="Fraser C.M."/>
            <person name="Venter J.C."/>
            <person name="Davis R.W."/>
        </authorList>
    </citation>
    <scope>NUCLEOTIDE SEQUENCE [LARGE SCALE GENOMIC DNA]</scope>
    <source>
        <strain>cv. Columbia</strain>
    </source>
</reference>
<reference key="2">
    <citation type="journal article" date="2017" name="Plant J.">
        <title>Araport11: a complete reannotation of the Arabidopsis thaliana reference genome.</title>
        <authorList>
            <person name="Cheng C.Y."/>
            <person name="Krishnakumar V."/>
            <person name="Chan A.P."/>
            <person name="Thibaud-Nissen F."/>
            <person name="Schobel S."/>
            <person name="Town C.D."/>
        </authorList>
    </citation>
    <scope>GENOME REANNOTATION</scope>
    <source>
        <strain>cv. Columbia</strain>
    </source>
</reference>
<reference key="3">
    <citation type="journal article" date="2003" name="Science">
        <title>Empirical analysis of transcriptional activity in the Arabidopsis genome.</title>
        <authorList>
            <person name="Yamada K."/>
            <person name="Lim J."/>
            <person name="Dale J.M."/>
            <person name="Chen H."/>
            <person name="Shinn P."/>
            <person name="Palm C.J."/>
            <person name="Southwick A.M."/>
            <person name="Wu H.C."/>
            <person name="Kim C.J."/>
            <person name="Nguyen M."/>
            <person name="Pham P.K."/>
            <person name="Cheuk R.F."/>
            <person name="Karlin-Newmann G."/>
            <person name="Liu S.X."/>
            <person name="Lam B."/>
            <person name="Sakano H."/>
            <person name="Wu T."/>
            <person name="Yu G."/>
            <person name="Miranda M."/>
            <person name="Quach H.L."/>
            <person name="Tripp M."/>
            <person name="Chang C.H."/>
            <person name="Lee J.M."/>
            <person name="Toriumi M.J."/>
            <person name="Chan M.M."/>
            <person name="Tang C.C."/>
            <person name="Onodera C.S."/>
            <person name="Deng J.M."/>
            <person name="Akiyama K."/>
            <person name="Ansari Y."/>
            <person name="Arakawa T."/>
            <person name="Banh J."/>
            <person name="Banno F."/>
            <person name="Bowser L."/>
            <person name="Brooks S.Y."/>
            <person name="Carninci P."/>
            <person name="Chao Q."/>
            <person name="Choy N."/>
            <person name="Enju A."/>
            <person name="Goldsmith A.D."/>
            <person name="Gurjal M."/>
            <person name="Hansen N.F."/>
            <person name="Hayashizaki Y."/>
            <person name="Johnson-Hopson C."/>
            <person name="Hsuan V.W."/>
            <person name="Iida K."/>
            <person name="Karnes M."/>
            <person name="Khan S."/>
            <person name="Koesema E."/>
            <person name="Ishida J."/>
            <person name="Jiang P.X."/>
            <person name="Jones T."/>
            <person name="Kawai J."/>
            <person name="Kamiya A."/>
            <person name="Meyers C."/>
            <person name="Nakajima M."/>
            <person name="Narusaka M."/>
            <person name="Seki M."/>
            <person name="Sakurai T."/>
            <person name="Satou M."/>
            <person name="Tamse R."/>
            <person name="Vaysberg M."/>
            <person name="Wallender E.K."/>
            <person name="Wong C."/>
            <person name="Yamamura Y."/>
            <person name="Yuan S."/>
            <person name="Shinozaki K."/>
            <person name="Davis R.W."/>
            <person name="Theologis A."/>
            <person name="Ecker J.R."/>
        </authorList>
    </citation>
    <scope>NUCLEOTIDE SEQUENCE [LARGE SCALE MRNA]</scope>
    <source>
        <strain>cv. Columbia</strain>
    </source>
</reference>
<reference key="4">
    <citation type="journal article" date="2007" name="Plant J.">
        <title>Identification of a flavin-monooxygenase as the S-oxygenating enzyme in aliphatic glucosinolate biosynthesis in Arabidopsis.</title>
        <authorList>
            <person name="Hansen B.G."/>
            <person name="Kliebenstein D.J."/>
            <person name="Halkier B.A."/>
        </authorList>
    </citation>
    <scope>FUNCTION</scope>
    <scope>CATALYTIC ACTIVITY</scope>
    <scope>TISSUE SPECIFICITY</scope>
    <scope>DISRUPTION PHENOTYPE</scope>
    <scope>GENE FAMILY</scope>
    <source>
        <strain>cv. Columbia</strain>
    </source>
</reference>
<organism>
    <name type="scientific">Arabidopsis thaliana</name>
    <name type="common">Mouse-ear cress</name>
    <dbReference type="NCBI Taxonomy" id="3702"/>
    <lineage>
        <taxon>Eukaryota</taxon>
        <taxon>Viridiplantae</taxon>
        <taxon>Streptophyta</taxon>
        <taxon>Embryophyta</taxon>
        <taxon>Tracheophyta</taxon>
        <taxon>Spermatophyta</taxon>
        <taxon>Magnoliopsida</taxon>
        <taxon>eudicotyledons</taxon>
        <taxon>Gunneridae</taxon>
        <taxon>Pentapetalae</taxon>
        <taxon>rosids</taxon>
        <taxon>malvids</taxon>
        <taxon>Brassicales</taxon>
        <taxon>Brassicaceae</taxon>
        <taxon>Camelineae</taxon>
        <taxon>Arabidopsis</taxon>
    </lineage>
</organism>
<protein>
    <recommendedName>
        <fullName>Flavin-containing monooxygenase FMO GS-OX1</fullName>
        <ecNumber evidence="3">1.14.13.237</ecNumber>
    </recommendedName>
    <alternativeName>
        <fullName>Flavin-monooxygenase glucosinolate S-oxygenase 1</fullName>
    </alternativeName>
    <alternativeName>
        <fullName>Putative flavin-containing monooxygenase 3</fullName>
    </alternativeName>
</protein>